<evidence type="ECO:0000255" key="1">
    <source>
        <dbReference type="HAMAP-Rule" id="MF_01382"/>
    </source>
</evidence>
<dbReference type="EC" id="7.4.2.8" evidence="1"/>
<dbReference type="EMBL" id="CP000414">
    <property type="protein sequence ID" value="ABJ61314.1"/>
    <property type="molecule type" value="Genomic_DNA"/>
</dbReference>
<dbReference type="RefSeq" id="WP_011679122.1">
    <property type="nucleotide sequence ID" value="NC_008531.1"/>
</dbReference>
<dbReference type="SMR" id="Q03ZQ8"/>
<dbReference type="EnsemblBacteria" id="ABJ61314">
    <property type="protein sequence ID" value="ABJ61314"/>
    <property type="gene ID" value="LEUM_0183"/>
</dbReference>
<dbReference type="GeneID" id="29576595"/>
<dbReference type="KEGG" id="lme:LEUM_0183"/>
<dbReference type="eggNOG" id="COG0653">
    <property type="taxonomic scope" value="Bacteria"/>
</dbReference>
<dbReference type="HOGENOM" id="CLU_005314_3_0_9"/>
<dbReference type="Proteomes" id="UP000000362">
    <property type="component" value="Chromosome"/>
</dbReference>
<dbReference type="GO" id="GO:0031522">
    <property type="term" value="C:cell envelope Sec protein transport complex"/>
    <property type="evidence" value="ECO:0007669"/>
    <property type="project" value="TreeGrafter"/>
</dbReference>
<dbReference type="GO" id="GO:0005829">
    <property type="term" value="C:cytosol"/>
    <property type="evidence" value="ECO:0007669"/>
    <property type="project" value="TreeGrafter"/>
</dbReference>
<dbReference type="GO" id="GO:0005886">
    <property type="term" value="C:plasma membrane"/>
    <property type="evidence" value="ECO:0007669"/>
    <property type="project" value="UniProtKB-SubCell"/>
</dbReference>
<dbReference type="GO" id="GO:0005524">
    <property type="term" value="F:ATP binding"/>
    <property type="evidence" value="ECO:0007669"/>
    <property type="project" value="UniProtKB-UniRule"/>
</dbReference>
<dbReference type="GO" id="GO:0008564">
    <property type="term" value="F:protein-exporting ATPase activity"/>
    <property type="evidence" value="ECO:0007669"/>
    <property type="project" value="UniProtKB-EC"/>
</dbReference>
<dbReference type="GO" id="GO:0065002">
    <property type="term" value="P:intracellular protein transmembrane transport"/>
    <property type="evidence" value="ECO:0007669"/>
    <property type="project" value="UniProtKB-UniRule"/>
</dbReference>
<dbReference type="GO" id="GO:0017038">
    <property type="term" value="P:protein import"/>
    <property type="evidence" value="ECO:0007669"/>
    <property type="project" value="InterPro"/>
</dbReference>
<dbReference type="GO" id="GO:0006605">
    <property type="term" value="P:protein targeting"/>
    <property type="evidence" value="ECO:0007669"/>
    <property type="project" value="UniProtKB-UniRule"/>
</dbReference>
<dbReference type="GO" id="GO:0043952">
    <property type="term" value="P:protein transport by the Sec complex"/>
    <property type="evidence" value="ECO:0007669"/>
    <property type="project" value="TreeGrafter"/>
</dbReference>
<dbReference type="CDD" id="cd17928">
    <property type="entry name" value="DEXDc_SecA"/>
    <property type="match status" value="1"/>
</dbReference>
<dbReference type="CDD" id="cd18803">
    <property type="entry name" value="SF2_C_secA"/>
    <property type="match status" value="1"/>
</dbReference>
<dbReference type="FunFam" id="3.40.50.300:FF:000429">
    <property type="entry name" value="Preprotein translocase subunit SecA"/>
    <property type="match status" value="1"/>
</dbReference>
<dbReference type="Gene3D" id="1.10.3060.10">
    <property type="entry name" value="Helical scaffold and wing domains of SecA"/>
    <property type="match status" value="1"/>
</dbReference>
<dbReference type="Gene3D" id="3.40.50.300">
    <property type="entry name" value="P-loop containing nucleotide triphosphate hydrolases"/>
    <property type="match status" value="3"/>
</dbReference>
<dbReference type="Gene3D" id="3.90.1440.10">
    <property type="entry name" value="SecA, preprotein cross-linking domain"/>
    <property type="match status" value="1"/>
</dbReference>
<dbReference type="HAMAP" id="MF_01382">
    <property type="entry name" value="SecA"/>
    <property type="match status" value="1"/>
</dbReference>
<dbReference type="InterPro" id="IPR014001">
    <property type="entry name" value="Helicase_ATP-bd"/>
</dbReference>
<dbReference type="InterPro" id="IPR001650">
    <property type="entry name" value="Helicase_C-like"/>
</dbReference>
<dbReference type="InterPro" id="IPR027417">
    <property type="entry name" value="P-loop_NTPase"/>
</dbReference>
<dbReference type="InterPro" id="IPR000185">
    <property type="entry name" value="SecA"/>
</dbReference>
<dbReference type="InterPro" id="IPR020937">
    <property type="entry name" value="SecA_CS"/>
</dbReference>
<dbReference type="InterPro" id="IPR011115">
    <property type="entry name" value="SecA_DEAD"/>
</dbReference>
<dbReference type="InterPro" id="IPR014018">
    <property type="entry name" value="SecA_motor_DEAD"/>
</dbReference>
<dbReference type="InterPro" id="IPR011130">
    <property type="entry name" value="SecA_preprotein_X-link_dom"/>
</dbReference>
<dbReference type="InterPro" id="IPR044722">
    <property type="entry name" value="SecA_SF2_C"/>
</dbReference>
<dbReference type="InterPro" id="IPR011116">
    <property type="entry name" value="SecA_Wing/Scaffold"/>
</dbReference>
<dbReference type="InterPro" id="IPR036266">
    <property type="entry name" value="SecA_Wing/Scaffold_sf"/>
</dbReference>
<dbReference type="InterPro" id="IPR036670">
    <property type="entry name" value="SecA_X-link_sf"/>
</dbReference>
<dbReference type="NCBIfam" id="NF006630">
    <property type="entry name" value="PRK09200.1"/>
    <property type="match status" value="1"/>
</dbReference>
<dbReference type="NCBIfam" id="TIGR00963">
    <property type="entry name" value="secA"/>
    <property type="match status" value="1"/>
</dbReference>
<dbReference type="PANTHER" id="PTHR30612:SF0">
    <property type="entry name" value="CHLOROPLAST PROTEIN-TRANSPORTING ATPASE"/>
    <property type="match status" value="1"/>
</dbReference>
<dbReference type="PANTHER" id="PTHR30612">
    <property type="entry name" value="SECA INNER MEMBRANE COMPONENT OF SEC PROTEIN SECRETION SYSTEM"/>
    <property type="match status" value="1"/>
</dbReference>
<dbReference type="Pfam" id="PF21090">
    <property type="entry name" value="P-loop_SecA"/>
    <property type="match status" value="2"/>
</dbReference>
<dbReference type="Pfam" id="PF07517">
    <property type="entry name" value="SecA_DEAD"/>
    <property type="match status" value="1"/>
</dbReference>
<dbReference type="Pfam" id="PF01043">
    <property type="entry name" value="SecA_PP_bind"/>
    <property type="match status" value="1"/>
</dbReference>
<dbReference type="Pfam" id="PF07516">
    <property type="entry name" value="SecA_SW"/>
    <property type="match status" value="1"/>
</dbReference>
<dbReference type="PRINTS" id="PR00906">
    <property type="entry name" value="SECA"/>
</dbReference>
<dbReference type="SMART" id="SM00957">
    <property type="entry name" value="SecA_DEAD"/>
    <property type="match status" value="1"/>
</dbReference>
<dbReference type="SMART" id="SM00958">
    <property type="entry name" value="SecA_PP_bind"/>
    <property type="match status" value="1"/>
</dbReference>
<dbReference type="SUPFAM" id="SSF81886">
    <property type="entry name" value="Helical scaffold and wing domains of SecA"/>
    <property type="match status" value="1"/>
</dbReference>
<dbReference type="SUPFAM" id="SSF52540">
    <property type="entry name" value="P-loop containing nucleoside triphosphate hydrolases"/>
    <property type="match status" value="2"/>
</dbReference>
<dbReference type="SUPFAM" id="SSF81767">
    <property type="entry name" value="Pre-protein crosslinking domain of SecA"/>
    <property type="match status" value="1"/>
</dbReference>
<dbReference type="PROSITE" id="PS01312">
    <property type="entry name" value="SECA"/>
    <property type="match status" value="1"/>
</dbReference>
<dbReference type="PROSITE" id="PS51196">
    <property type="entry name" value="SECA_MOTOR_DEAD"/>
    <property type="match status" value="1"/>
</dbReference>
<keyword id="KW-0067">ATP-binding</keyword>
<keyword id="KW-1003">Cell membrane</keyword>
<keyword id="KW-0963">Cytoplasm</keyword>
<keyword id="KW-0472">Membrane</keyword>
<keyword id="KW-0547">Nucleotide-binding</keyword>
<keyword id="KW-0653">Protein transport</keyword>
<keyword id="KW-1185">Reference proteome</keyword>
<keyword id="KW-1278">Translocase</keyword>
<keyword id="KW-0811">Translocation</keyword>
<keyword id="KW-0813">Transport</keyword>
<reference key="1">
    <citation type="journal article" date="2006" name="Proc. Natl. Acad. Sci. U.S.A.">
        <title>Comparative genomics of the lactic acid bacteria.</title>
        <authorList>
            <person name="Makarova K.S."/>
            <person name="Slesarev A."/>
            <person name="Wolf Y.I."/>
            <person name="Sorokin A."/>
            <person name="Mirkin B."/>
            <person name="Koonin E.V."/>
            <person name="Pavlov A."/>
            <person name="Pavlova N."/>
            <person name="Karamychev V."/>
            <person name="Polouchine N."/>
            <person name="Shakhova V."/>
            <person name="Grigoriev I."/>
            <person name="Lou Y."/>
            <person name="Rohksar D."/>
            <person name="Lucas S."/>
            <person name="Huang K."/>
            <person name="Goodstein D.M."/>
            <person name="Hawkins T."/>
            <person name="Plengvidhya V."/>
            <person name="Welker D."/>
            <person name="Hughes J."/>
            <person name="Goh Y."/>
            <person name="Benson A."/>
            <person name="Baldwin K."/>
            <person name="Lee J.-H."/>
            <person name="Diaz-Muniz I."/>
            <person name="Dosti B."/>
            <person name="Smeianov V."/>
            <person name="Wechter W."/>
            <person name="Barabote R."/>
            <person name="Lorca G."/>
            <person name="Altermann E."/>
            <person name="Barrangou R."/>
            <person name="Ganesan B."/>
            <person name="Xie Y."/>
            <person name="Rawsthorne H."/>
            <person name="Tamir D."/>
            <person name="Parker C."/>
            <person name="Breidt F."/>
            <person name="Broadbent J.R."/>
            <person name="Hutkins R."/>
            <person name="O'Sullivan D."/>
            <person name="Steele J."/>
            <person name="Unlu G."/>
            <person name="Saier M.H. Jr."/>
            <person name="Klaenhammer T."/>
            <person name="Richardson P."/>
            <person name="Kozyavkin S."/>
            <person name="Weimer B.C."/>
            <person name="Mills D.A."/>
        </authorList>
    </citation>
    <scope>NUCLEOTIDE SEQUENCE [LARGE SCALE GENOMIC DNA]</scope>
    <source>
        <strain>ATCC 8293 / DSM 20343 / BCRC 11652 / CCM 1803 / JCM 6124 / NCDO 523 / NBRC 100496 / NCIMB 8023 / NCTC 12954 / NRRL B-1118 / 37Y</strain>
    </source>
</reference>
<protein>
    <recommendedName>
        <fullName evidence="1">Protein translocase subunit SecA</fullName>
        <ecNumber evidence="1">7.4.2.8</ecNumber>
    </recommendedName>
</protein>
<accession>Q03ZQ8</accession>
<name>SECA_LEUMM</name>
<gene>
    <name evidence="1" type="primary">secA</name>
    <name type="ordered locus">LEUM_0183</name>
</gene>
<organism>
    <name type="scientific">Leuconostoc mesenteroides subsp. mesenteroides (strain ATCC 8293 / DSM 20343 / BCRC 11652 / CCM 1803 / JCM 6124 / NCDO 523 / NBRC 100496 / NCIMB 8023 / NCTC 12954 / NRRL B-1118 / 37Y)</name>
    <dbReference type="NCBI Taxonomy" id="203120"/>
    <lineage>
        <taxon>Bacteria</taxon>
        <taxon>Bacillati</taxon>
        <taxon>Bacillota</taxon>
        <taxon>Bacilli</taxon>
        <taxon>Lactobacillales</taxon>
        <taxon>Lactobacillaceae</taxon>
        <taxon>Leuconostoc</taxon>
    </lineage>
</organism>
<sequence length="803" mass="90561">MANPIRKLVDNSKQQLKKLNKIADQVESYADTMASMSDSELQAKTGEFKSKIADAIDGIEDKDKQNKALAKVLDELLPEAFAVAREGAKRVLGLYPFHVQIMGSIVLHGGNLAEMRTGEGKTLTATMAVYLNALSGRGVHVVTVNDYLSARDAEQMGQLYNWLGLTVGVNVGDAPAEEKRAAYNADITYSTNFNIGFDYLRDNMVRRADERVMQRGLNFALIDEADSILIDTARTPLIISGPGSGVSQLYARADRFVKTLQRDEDFKVDEEAKATLLTPEGIHKGEIFFNLNNLYDADDTALTHHIDQALRANFNYIKDKDYVVQDGEVKLIDQSTGRISEGTRLSDGLHQAIEAKENVEIQEENKSMAQITYQNLFRMYKKLSGMTGTAKTEEEELREIYNMEVISIPTNRPVRRVDKPDLLYTSIRAKYNAVVKLIVELHEKGQPILIGTGSVEDSELLSKILMTKNLPHNVLNAKNNAKEAEIIANAGQRGAITVATNMAGRGTDIKLGPGVAELGGLVVIATERHESRRIDNQLRGRAGRQGDEGFSQFFLSLEDDLMIRFGAERVRLMMQRMNLDEDTVITNRFITRSVESAQKRVEGNNYDTRKNVLQYDDVVREQRELIYHERDVVIDESESLEWVLMPMVERTINRVVDAQTKEKKSSDWNLPQIVAFVGNALAHDDAVTVQQLQGLTRDEIKAKLLELAKLNYKEKQSQLYDPEQMLEFEKVVILRAVDQHWTDHIDSLDRLRQGVGLRGYGQLNPLIEYQSEAFANFQKMIADVEYDTTRTFMKAEIRQNLRS</sequence>
<feature type="chain" id="PRO_1000073490" description="Protein translocase subunit SecA">
    <location>
        <begin position="1"/>
        <end position="803"/>
    </location>
</feature>
<feature type="binding site" evidence="1">
    <location>
        <position position="100"/>
    </location>
    <ligand>
        <name>ATP</name>
        <dbReference type="ChEBI" id="CHEBI:30616"/>
    </ligand>
</feature>
<feature type="binding site" evidence="1">
    <location>
        <begin position="118"/>
        <end position="122"/>
    </location>
    <ligand>
        <name>ATP</name>
        <dbReference type="ChEBI" id="CHEBI:30616"/>
    </ligand>
</feature>
<feature type="binding site" evidence="1">
    <location>
        <position position="508"/>
    </location>
    <ligand>
        <name>ATP</name>
        <dbReference type="ChEBI" id="CHEBI:30616"/>
    </ligand>
</feature>
<proteinExistence type="inferred from homology"/>
<comment type="function">
    <text evidence="1">Part of the Sec protein translocase complex. Interacts with the SecYEG preprotein conducting channel. Has a central role in coupling the hydrolysis of ATP to the transfer of proteins into and across the cell membrane, serving as an ATP-driven molecular motor driving the stepwise translocation of polypeptide chains across the membrane.</text>
</comment>
<comment type="catalytic activity">
    <reaction evidence="1">
        <text>ATP + H2O + cellular proteinSide 1 = ADP + phosphate + cellular proteinSide 2.</text>
        <dbReference type="EC" id="7.4.2.8"/>
    </reaction>
</comment>
<comment type="subunit">
    <text evidence="1">Monomer and homodimer. Part of the essential Sec protein translocation apparatus which comprises SecA, SecYEG and auxiliary proteins SecDF. Other proteins may also be involved.</text>
</comment>
<comment type="subcellular location">
    <subcellularLocation>
        <location evidence="1">Cell membrane</location>
        <topology evidence="1">Peripheral membrane protein</topology>
        <orientation evidence="1">Cytoplasmic side</orientation>
    </subcellularLocation>
    <subcellularLocation>
        <location evidence="1">Cytoplasm</location>
    </subcellularLocation>
    <text evidence="1">Distribution is 50-50.</text>
</comment>
<comment type="similarity">
    <text evidence="1">Belongs to the SecA family.</text>
</comment>